<dbReference type="EC" id="2.4.2.17" evidence="1"/>
<dbReference type="EMBL" id="CP000958">
    <property type="protein sequence ID" value="ACA89583.1"/>
    <property type="molecule type" value="Genomic_DNA"/>
</dbReference>
<dbReference type="RefSeq" id="WP_012327780.1">
    <property type="nucleotide sequence ID" value="NC_010508.1"/>
</dbReference>
<dbReference type="SMR" id="B1JU98"/>
<dbReference type="GeneID" id="83047206"/>
<dbReference type="KEGG" id="bcm:Bcenmc03_0403"/>
<dbReference type="HOGENOM" id="CLU_038115_2_0_4"/>
<dbReference type="UniPathway" id="UPA00031">
    <property type="reaction ID" value="UER00006"/>
</dbReference>
<dbReference type="Proteomes" id="UP000002169">
    <property type="component" value="Chromosome 1"/>
</dbReference>
<dbReference type="GO" id="GO:0005737">
    <property type="term" value="C:cytoplasm"/>
    <property type="evidence" value="ECO:0007669"/>
    <property type="project" value="UniProtKB-SubCell"/>
</dbReference>
<dbReference type="GO" id="GO:0005524">
    <property type="term" value="F:ATP binding"/>
    <property type="evidence" value="ECO:0007669"/>
    <property type="project" value="UniProtKB-KW"/>
</dbReference>
<dbReference type="GO" id="GO:0003879">
    <property type="term" value="F:ATP phosphoribosyltransferase activity"/>
    <property type="evidence" value="ECO:0007669"/>
    <property type="project" value="UniProtKB-UniRule"/>
</dbReference>
<dbReference type="GO" id="GO:0000105">
    <property type="term" value="P:L-histidine biosynthetic process"/>
    <property type="evidence" value="ECO:0007669"/>
    <property type="project" value="UniProtKB-UniRule"/>
</dbReference>
<dbReference type="CDD" id="cd13595">
    <property type="entry name" value="PBP2_HisGs"/>
    <property type="match status" value="1"/>
</dbReference>
<dbReference type="FunFam" id="3.40.190.10:FF:000011">
    <property type="entry name" value="ATP phosphoribosyltransferase"/>
    <property type="match status" value="1"/>
</dbReference>
<dbReference type="Gene3D" id="3.40.190.10">
    <property type="entry name" value="Periplasmic binding protein-like II"/>
    <property type="match status" value="2"/>
</dbReference>
<dbReference type="HAMAP" id="MF_01018">
    <property type="entry name" value="HisG_Short"/>
    <property type="match status" value="1"/>
</dbReference>
<dbReference type="InterPro" id="IPR013820">
    <property type="entry name" value="ATP_PRibTrfase_cat"/>
</dbReference>
<dbReference type="InterPro" id="IPR018198">
    <property type="entry name" value="ATP_PRibTrfase_CS"/>
</dbReference>
<dbReference type="InterPro" id="IPR001348">
    <property type="entry name" value="ATP_PRibTrfase_HisG"/>
</dbReference>
<dbReference type="InterPro" id="IPR024893">
    <property type="entry name" value="ATP_PRibTrfase_HisG_short"/>
</dbReference>
<dbReference type="NCBIfam" id="TIGR00070">
    <property type="entry name" value="hisG"/>
    <property type="match status" value="1"/>
</dbReference>
<dbReference type="PANTHER" id="PTHR21403:SF8">
    <property type="entry name" value="ATP PHOSPHORIBOSYLTRANSFERASE"/>
    <property type="match status" value="1"/>
</dbReference>
<dbReference type="PANTHER" id="PTHR21403">
    <property type="entry name" value="ATP PHOSPHORIBOSYLTRANSFERASE ATP-PRTASE"/>
    <property type="match status" value="1"/>
</dbReference>
<dbReference type="Pfam" id="PF01634">
    <property type="entry name" value="HisG"/>
    <property type="match status" value="1"/>
</dbReference>
<dbReference type="SUPFAM" id="SSF53850">
    <property type="entry name" value="Periplasmic binding protein-like II"/>
    <property type="match status" value="1"/>
</dbReference>
<dbReference type="PROSITE" id="PS01316">
    <property type="entry name" value="ATP_P_PHORIBOSYLTR"/>
    <property type="match status" value="1"/>
</dbReference>
<protein>
    <recommendedName>
        <fullName evidence="1">ATP phosphoribosyltransferase</fullName>
        <shortName evidence="1">ATP-PRT</shortName>
        <shortName evidence="1">ATP-PRTase</shortName>
        <ecNumber evidence="1">2.4.2.17</ecNumber>
    </recommendedName>
</protein>
<comment type="function">
    <text evidence="1">Catalyzes the condensation of ATP and 5-phosphoribose 1-diphosphate to form N'-(5'-phosphoribosyl)-ATP (PR-ATP). Has a crucial role in the pathway because the rate of histidine biosynthesis seems to be controlled primarily by regulation of HisG enzymatic activity.</text>
</comment>
<comment type="catalytic activity">
    <reaction evidence="1">
        <text>1-(5-phospho-beta-D-ribosyl)-ATP + diphosphate = 5-phospho-alpha-D-ribose 1-diphosphate + ATP</text>
        <dbReference type="Rhea" id="RHEA:18473"/>
        <dbReference type="ChEBI" id="CHEBI:30616"/>
        <dbReference type="ChEBI" id="CHEBI:33019"/>
        <dbReference type="ChEBI" id="CHEBI:58017"/>
        <dbReference type="ChEBI" id="CHEBI:73183"/>
        <dbReference type="EC" id="2.4.2.17"/>
    </reaction>
</comment>
<comment type="pathway">
    <text evidence="1">Amino-acid biosynthesis; L-histidine biosynthesis; L-histidine from 5-phospho-alpha-D-ribose 1-diphosphate: step 1/9.</text>
</comment>
<comment type="subunit">
    <text evidence="1">Heteromultimer composed of HisG and HisZ subunits.</text>
</comment>
<comment type="subcellular location">
    <subcellularLocation>
        <location evidence="1">Cytoplasm</location>
    </subcellularLocation>
</comment>
<comment type="domain">
    <text>Lacks the C-terminal regulatory region which is replaced by HisZ.</text>
</comment>
<comment type="similarity">
    <text evidence="1">Belongs to the ATP phosphoribosyltransferase family. Short subfamily.</text>
</comment>
<sequence length="217" mass="23042">MTAPLTLALSKGRIFEETLPLLAAAGVQVTEDPETSRKLILPTTNPDLRVIIVRASDVPTYVEYGAADFGVAGKDVLVEHGGSGLYQPIDLNIARCRMSVAVSAGFDYASAVRQGARLRVATKYVETAREHFAAKGVHVDLIKLYGSMELAPLVGLADAIVDLVSSGGTLKANNLVEVEEIMAISSRLVVNQAALKLKRAALKPILDAFERASQNGG</sequence>
<accession>B1JU98</accession>
<keyword id="KW-0028">Amino-acid biosynthesis</keyword>
<keyword id="KW-0067">ATP-binding</keyword>
<keyword id="KW-0963">Cytoplasm</keyword>
<keyword id="KW-0328">Glycosyltransferase</keyword>
<keyword id="KW-0368">Histidine biosynthesis</keyword>
<keyword id="KW-0547">Nucleotide-binding</keyword>
<keyword id="KW-0808">Transferase</keyword>
<proteinExistence type="inferred from homology"/>
<gene>
    <name evidence="1" type="primary">hisG</name>
    <name type="ordered locus">Bcenmc03_0403</name>
</gene>
<evidence type="ECO:0000255" key="1">
    <source>
        <dbReference type="HAMAP-Rule" id="MF_01018"/>
    </source>
</evidence>
<feature type="chain" id="PRO_1000135273" description="ATP phosphoribosyltransferase">
    <location>
        <begin position="1"/>
        <end position="217"/>
    </location>
</feature>
<reference key="1">
    <citation type="submission" date="2008-02" db="EMBL/GenBank/DDBJ databases">
        <title>Complete sequence of chromosome 1 of Burkholderia cenocepacia MC0-3.</title>
        <authorList>
            <person name="Copeland A."/>
            <person name="Lucas S."/>
            <person name="Lapidus A."/>
            <person name="Barry K."/>
            <person name="Bruce D."/>
            <person name="Goodwin L."/>
            <person name="Glavina del Rio T."/>
            <person name="Dalin E."/>
            <person name="Tice H."/>
            <person name="Pitluck S."/>
            <person name="Chain P."/>
            <person name="Malfatti S."/>
            <person name="Shin M."/>
            <person name="Vergez L."/>
            <person name="Schmutz J."/>
            <person name="Larimer F."/>
            <person name="Land M."/>
            <person name="Hauser L."/>
            <person name="Kyrpides N."/>
            <person name="Mikhailova N."/>
            <person name="Tiedje J."/>
            <person name="Richardson P."/>
        </authorList>
    </citation>
    <scope>NUCLEOTIDE SEQUENCE [LARGE SCALE GENOMIC DNA]</scope>
    <source>
        <strain>MC0-3</strain>
    </source>
</reference>
<organism>
    <name type="scientific">Burkholderia orbicola (strain MC0-3)</name>
    <dbReference type="NCBI Taxonomy" id="406425"/>
    <lineage>
        <taxon>Bacteria</taxon>
        <taxon>Pseudomonadati</taxon>
        <taxon>Pseudomonadota</taxon>
        <taxon>Betaproteobacteria</taxon>
        <taxon>Burkholderiales</taxon>
        <taxon>Burkholderiaceae</taxon>
        <taxon>Burkholderia</taxon>
        <taxon>Burkholderia cepacia complex</taxon>
        <taxon>Burkholderia orbicola</taxon>
    </lineage>
</organism>
<name>HIS1_BURO0</name>